<dbReference type="EC" id="6.2.1.5" evidence="1"/>
<dbReference type="EMBL" id="AP003804">
    <property type="protein sequence ID" value="BAC83073.1"/>
    <property type="molecule type" value="Genomic_DNA"/>
</dbReference>
<dbReference type="EMBL" id="AP014963">
    <property type="protein sequence ID" value="BAT02305.1"/>
    <property type="molecule type" value="Genomic_DNA"/>
</dbReference>
<dbReference type="EMBL" id="CM000144">
    <property type="protein sequence ID" value="EAZ40411.1"/>
    <property type="molecule type" value="Genomic_DNA"/>
</dbReference>
<dbReference type="EMBL" id="AK243282">
    <property type="protein sequence ID" value="BAH01520.1"/>
    <property type="molecule type" value="mRNA"/>
</dbReference>
<dbReference type="RefSeq" id="XP_015647737.1">
    <property type="nucleotide sequence ID" value="XM_015792251.1"/>
</dbReference>
<dbReference type="SMR" id="Q6ZL94"/>
<dbReference type="FunCoup" id="Q6ZL94">
    <property type="interactions" value="2711"/>
</dbReference>
<dbReference type="STRING" id="39947.Q6ZL94"/>
<dbReference type="PaxDb" id="39947-Q6ZL94"/>
<dbReference type="EnsemblPlants" id="Os07t0577700-01">
    <property type="protein sequence ID" value="Os07t0577700-01"/>
    <property type="gene ID" value="Os07g0577700"/>
</dbReference>
<dbReference type="Gramene" id="Os07t0577700-01">
    <property type="protein sequence ID" value="Os07t0577700-01"/>
    <property type="gene ID" value="Os07g0577700"/>
</dbReference>
<dbReference type="eggNOG" id="KOG1255">
    <property type="taxonomic scope" value="Eukaryota"/>
</dbReference>
<dbReference type="HOGENOM" id="CLU_052104_0_0_1"/>
<dbReference type="InParanoid" id="Q6ZL94"/>
<dbReference type="OMA" id="VIICITE"/>
<dbReference type="OrthoDB" id="1664372at2759"/>
<dbReference type="PlantReactome" id="R-OSA-1119533">
    <property type="pathway name" value="TCA cycle (plant)"/>
</dbReference>
<dbReference type="UniPathway" id="UPA00223">
    <property type="reaction ID" value="UER00999"/>
</dbReference>
<dbReference type="Proteomes" id="UP000000763">
    <property type="component" value="Chromosome 7"/>
</dbReference>
<dbReference type="Proteomes" id="UP000007752">
    <property type="component" value="Chromosome 7"/>
</dbReference>
<dbReference type="Proteomes" id="UP000059680">
    <property type="component" value="Chromosome 7"/>
</dbReference>
<dbReference type="GO" id="GO:0005739">
    <property type="term" value="C:mitochondrion"/>
    <property type="evidence" value="ECO:0000318"/>
    <property type="project" value="GO_Central"/>
</dbReference>
<dbReference type="GO" id="GO:0009361">
    <property type="term" value="C:succinate-CoA ligase complex (ADP-forming)"/>
    <property type="evidence" value="ECO:0000318"/>
    <property type="project" value="GO_Central"/>
</dbReference>
<dbReference type="GO" id="GO:0000166">
    <property type="term" value="F:nucleotide binding"/>
    <property type="evidence" value="ECO:0007669"/>
    <property type="project" value="UniProtKB-KW"/>
</dbReference>
<dbReference type="GO" id="GO:0004775">
    <property type="term" value="F:succinate-CoA ligase (ADP-forming) activity"/>
    <property type="evidence" value="ECO:0000318"/>
    <property type="project" value="GO_Central"/>
</dbReference>
<dbReference type="GO" id="GO:0004776">
    <property type="term" value="F:succinate-CoA ligase (GDP-forming) activity"/>
    <property type="evidence" value="ECO:0000318"/>
    <property type="project" value="GO_Central"/>
</dbReference>
<dbReference type="GO" id="GO:0006099">
    <property type="term" value="P:tricarboxylic acid cycle"/>
    <property type="evidence" value="ECO:0000318"/>
    <property type="project" value="GO_Central"/>
</dbReference>
<dbReference type="FunFam" id="3.40.50.720:FF:000002">
    <property type="entry name" value="Succinate--CoA ligase [ADP-forming] subunit alpha"/>
    <property type="match status" value="1"/>
</dbReference>
<dbReference type="FunFam" id="3.40.50.261:FF:000005">
    <property type="entry name" value="Succinate--CoA ligase [ADP-forming] subunit alpha, mitochondrial"/>
    <property type="match status" value="1"/>
</dbReference>
<dbReference type="Gene3D" id="3.40.50.720">
    <property type="entry name" value="NAD(P)-binding Rossmann-like Domain"/>
    <property type="match status" value="1"/>
</dbReference>
<dbReference type="Gene3D" id="3.40.50.261">
    <property type="entry name" value="Succinyl-CoA synthetase domains"/>
    <property type="match status" value="1"/>
</dbReference>
<dbReference type="HAMAP" id="MF_01988">
    <property type="entry name" value="Succ_CoA_alpha"/>
    <property type="match status" value="1"/>
</dbReference>
<dbReference type="InterPro" id="IPR017440">
    <property type="entry name" value="Cit_synth/succinyl-CoA_lig_AS"/>
</dbReference>
<dbReference type="InterPro" id="IPR033847">
    <property type="entry name" value="Citrt_syn/SCS-alpha_CS"/>
</dbReference>
<dbReference type="InterPro" id="IPR003781">
    <property type="entry name" value="CoA-bd"/>
</dbReference>
<dbReference type="InterPro" id="IPR005810">
    <property type="entry name" value="CoA_lig_alpha"/>
</dbReference>
<dbReference type="InterPro" id="IPR036291">
    <property type="entry name" value="NAD(P)-bd_dom_sf"/>
</dbReference>
<dbReference type="InterPro" id="IPR005811">
    <property type="entry name" value="SUCC_ACL_C"/>
</dbReference>
<dbReference type="InterPro" id="IPR016102">
    <property type="entry name" value="Succinyl-CoA_synth-like"/>
</dbReference>
<dbReference type="NCBIfam" id="NF004230">
    <property type="entry name" value="PRK05678.1"/>
    <property type="match status" value="1"/>
</dbReference>
<dbReference type="NCBIfam" id="TIGR01019">
    <property type="entry name" value="sucCoAalpha"/>
    <property type="match status" value="1"/>
</dbReference>
<dbReference type="PANTHER" id="PTHR11117:SF2">
    <property type="entry name" value="SUCCINATE--COA LIGASE [ADP_GDP-FORMING] SUBUNIT ALPHA, MITOCHONDRIAL"/>
    <property type="match status" value="1"/>
</dbReference>
<dbReference type="PANTHER" id="PTHR11117">
    <property type="entry name" value="SUCCINYL-COA LIGASE SUBUNIT ALPHA"/>
    <property type="match status" value="1"/>
</dbReference>
<dbReference type="Pfam" id="PF02629">
    <property type="entry name" value="CoA_binding"/>
    <property type="match status" value="1"/>
</dbReference>
<dbReference type="Pfam" id="PF00549">
    <property type="entry name" value="Ligase_CoA"/>
    <property type="match status" value="1"/>
</dbReference>
<dbReference type="PIRSF" id="PIRSF001553">
    <property type="entry name" value="SucCS_alpha"/>
    <property type="match status" value="1"/>
</dbReference>
<dbReference type="PRINTS" id="PR01798">
    <property type="entry name" value="SCOASYNTHASE"/>
</dbReference>
<dbReference type="SMART" id="SM00881">
    <property type="entry name" value="CoA_binding"/>
    <property type="match status" value="1"/>
</dbReference>
<dbReference type="SUPFAM" id="SSF51735">
    <property type="entry name" value="NAD(P)-binding Rossmann-fold domains"/>
    <property type="match status" value="1"/>
</dbReference>
<dbReference type="SUPFAM" id="SSF52210">
    <property type="entry name" value="Succinyl-CoA synthetase domains"/>
    <property type="match status" value="1"/>
</dbReference>
<dbReference type="PROSITE" id="PS01216">
    <property type="entry name" value="SUCCINYL_COA_LIG_1"/>
    <property type="match status" value="1"/>
</dbReference>
<dbReference type="PROSITE" id="PS00399">
    <property type="entry name" value="SUCCINYL_COA_LIG_2"/>
    <property type="match status" value="1"/>
</dbReference>
<comment type="function">
    <text evidence="1">Succinyl-CoA synthetase functions in the citric acid cycle (TCA), coupling the hydrolysis of succinyl-CoA to the synthesis of ATP and thus represents the only step of substrate-level phosphorylation in the TCA. The alpha subunit of the enzyme binds the substrates coenzyme A and phosphate, while succinate binding and nucleotide specificity is provided by the beta subunit.</text>
</comment>
<comment type="catalytic activity">
    <reaction evidence="1">
        <text>succinate + ATP + CoA = succinyl-CoA + ADP + phosphate</text>
        <dbReference type="Rhea" id="RHEA:17661"/>
        <dbReference type="ChEBI" id="CHEBI:30031"/>
        <dbReference type="ChEBI" id="CHEBI:30616"/>
        <dbReference type="ChEBI" id="CHEBI:43474"/>
        <dbReference type="ChEBI" id="CHEBI:57287"/>
        <dbReference type="ChEBI" id="CHEBI:57292"/>
        <dbReference type="ChEBI" id="CHEBI:456216"/>
        <dbReference type="EC" id="6.2.1.5"/>
    </reaction>
</comment>
<comment type="pathway">
    <text evidence="1">Carbohydrate metabolism; tricarboxylic acid cycle; succinate from succinyl-CoA (ligase route): step 1/1.</text>
</comment>
<comment type="subunit">
    <text evidence="1">Heterodimer of an alpha and a beta subunit.</text>
</comment>
<comment type="subcellular location">
    <subcellularLocation>
        <location evidence="1">Mitochondrion</location>
    </subcellularLocation>
</comment>
<comment type="similarity">
    <text evidence="1">Belongs to the succinate/malate CoA ligase alpha subunit family.</text>
</comment>
<reference key="1">
    <citation type="journal article" date="2005" name="Nature">
        <title>The map-based sequence of the rice genome.</title>
        <authorList>
            <consortium name="International rice genome sequencing project (IRGSP)"/>
        </authorList>
    </citation>
    <scope>NUCLEOTIDE SEQUENCE [LARGE SCALE GENOMIC DNA]</scope>
    <source>
        <strain>cv. Nipponbare</strain>
    </source>
</reference>
<reference key="2">
    <citation type="journal article" date="2013" name="Rice">
        <title>Improvement of the Oryza sativa Nipponbare reference genome using next generation sequence and optical map data.</title>
        <authorList>
            <person name="Kawahara Y."/>
            <person name="de la Bastide M."/>
            <person name="Hamilton J.P."/>
            <person name="Kanamori H."/>
            <person name="McCombie W.R."/>
            <person name="Ouyang S."/>
            <person name="Schwartz D.C."/>
            <person name="Tanaka T."/>
            <person name="Wu J."/>
            <person name="Zhou S."/>
            <person name="Childs K.L."/>
            <person name="Davidson R.M."/>
            <person name="Lin H."/>
            <person name="Quesada-Ocampo L."/>
            <person name="Vaillancourt B."/>
            <person name="Sakai H."/>
            <person name="Lee S.S."/>
            <person name="Kim J."/>
            <person name="Numa H."/>
            <person name="Itoh T."/>
            <person name="Buell C.R."/>
            <person name="Matsumoto T."/>
        </authorList>
    </citation>
    <scope>GENOME REANNOTATION</scope>
    <source>
        <strain>cv. Nipponbare</strain>
    </source>
</reference>
<reference key="3">
    <citation type="journal article" date="2005" name="PLoS Biol.">
        <title>The genomes of Oryza sativa: a history of duplications.</title>
        <authorList>
            <person name="Yu J."/>
            <person name="Wang J."/>
            <person name="Lin W."/>
            <person name="Li S."/>
            <person name="Li H."/>
            <person name="Zhou J."/>
            <person name="Ni P."/>
            <person name="Dong W."/>
            <person name="Hu S."/>
            <person name="Zeng C."/>
            <person name="Zhang J."/>
            <person name="Zhang Y."/>
            <person name="Li R."/>
            <person name="Xu Z."/>
            <person name="Li S."/>
            <person name="Li X."/>
            <person name="Zheng H."/>
            <person name="Cong L."/>
            <person name="Lin L."/>
            <person name="Yin J."/>
            <person name="Geng J."/>
            <person name="Li G."/>
            <person name="Shi J."/>
            <person name="Liu J."/>
            <person name="Lv H."/>
            <person name="Li J."/>
            <person name="Wang J."/>
            <person name="Deng Y."/>
            <person name="Ran L."/>
            <person name="Shi X."/>
            <person name="Wang X."/>
            <person name="Wu Q."/>
            <person name="Li C."/>
            <person name="Ren X."/>
            <person name="Wang J."/>
            <person name="Wang X."/>
            <person name="Li D."/>
            <person name="Liu D."/>
            <person name="Zhang X."/>
            <person name="Ji Z."/>
            <person name="Zhao W."/>
            <person name="Sun Y."/>
            <person name="Zhang Z."/>
            <person name="Bao J."/>
            <person name="Han Y."/>
            <person name="Dong L."/>
            <person name="Ji J."/>
            <person name="Chen P."/>
            <person name="Wu S."/>
            <person name="Liu J."/>
            <person name="Xiao Y."/>
            <person name="Bu D."/>
            <person name="Tan J."/>
            <person name="Yang L."/>
            <person name="Ye C."/>
            <person name="Zhang J."/>
            <person name="Xu J."/>
            <person name="Zhou Y."/>
            <person name="Yu Y."/>
            <person name="Zhang B."/>
            <person name="Zhuang S."/>
            <person name="Wei H."/>
            <person name="Liu B."/>
            <person name="Lei M."/>
            <person name="Yu H."/>
            <person name="Li Y."/>
            <person name="Xu H."/>
            <person name="Wei S."/>
            <person name="He X."/>
            <person name="Fang L."/>
            <person name="Zhang Z."/>
            <person name="Zhang Y."/>
            <person name="Huang X."/>
            <person name="Su Z."/>
            <person name="Tong W."/>
            <person name="Li J."/>
            <person name="Tong Z."/>
            <person name="Li S."/>
            <person name="Ye J."/>
            <person name="Wang L."/>
            <person name="Fang L."/>
            <person name="Lei T."/>
            <person name="Chen C.-S."/>
            <person name="Chen H.-C."/>
            <person name="Xu Z."/>
            <person name="Li H."/>
            <person name="Huang H."/>
            <person name="Zhang F."/>
            <person name="Xu H."/>
            <person name="Li N."/>
            <person name="Zhao C."/>
            <person name="Li S."/>
            <person name="Dong L."/>
            <person name="Huang Y."/>
            <person name="Li L."/>
            <person name="Xi Y."/>
            <person name="Qi Q."/>
            <person name="Li W."/>
            <person name="Zhang B."/>
            <person name="Hu W."/>
            <person name="Zhang Y."/>
            <person name="Tian X."/>
            <person name="Jiao Y."/>
            <person name="Liang X."/>
            <person name="Jin J."/>
            <person name="Gao L."/>
            <person name="Zheng W."/>
            <person name="Hao B."/>
            <person name="Liu S.-M."/>
            <person name="Wang W."/>
            <person name="Yuan L."/>
            <person name="Cao M."/>
            <person name="McDermott J."/>
            <person name="Samudrala R."/>
            <person name="Wang J."/>
            <person name="Wong G.K.-S."/>
            <person name="Yang H."/>
        </authorList>
    </citation>
    <scope>NUCLEOTIDE SEQUENCE [LARGE SCALE GENOMIC DNA]</scope>
    <source>
        <strain>cv. Nipponbare</strain>
    </source>
</reference>
<reference key="4">
    <citation type="submission" date="2006-10" db="EMBL/GenBank/DDBJ databases">
        <title>Oryza sativa full length cDNA.</title>
        <authorList>
            <consortium name="The rice full-length cDNA consortium"/>
        </authorList>
    </citation>
    <scope>NUCLEOTIDE SEQUENCE [LARGE SCALE MRNA]</scope>
    <source>
        <strain>cv. Nipponbare</strain>
    </source>
</reference>
<reference key="5">
    <citation type="journal article" date="2006" name="Proteomics">
        <title>Proteomic analysis of rice leaf, stem and root tissues during growth course.</title>
        <authorList>
            <person name="Nozu Y."/>
            <person name="Tsugita A."/>
            <person name="Kamijo K."/>
        </authorList>
    </citation>
    <scope>PROTEIN SEQUENCE [LARGE SCALE ANALYSIS] OF 118-124</scope>
    <scope>IDENTIFICATION BY MASS SPECTROMETRY</scope>
    <source>
        <strain>cv. Nipponbare</strain>
    </source>
</reference>
<keyword id="KW-0903">Direct protein sequencing</keyword>
<keyword id="KW-0436">Ligase</keyword>
<keyword id="KW-0496">Mitochondrion</keyword>
<keyword id="KW-0547">Nucleotide-binding</keyword>
<keyword id="KW-1185">Reference proteome</keyword>
<keyword id="KW-0809">Transit peptide</keyword>
<keyword id="KW-0816">Tricarboxylic acid cycle</keyword>
<name>SUCA_ORYSJ</name>
<organism>
    <name type="scientific">Oryza sativa subsp. japonica</name>
    <name type="common">Rice</name>
    <dbReference type="NCBI Taxonomy" id="39947"/>
    <lineage>
        <taxon>Eukaryota</taxon>
        <taxon>Viridiplantae</taxon>
        <taxon>Streptophyta</taxon>
        <taxon>Embryophyta</taxon>
        <taxon>Tracheophyta</taxon>
        <taxon>Spermatophyta</taxon>
        <taxon>Magnoliopsida</taxon>
        <taxon>Liliopsida</taxon>
        <taxon>Poales</taxon>
        <taxon>Poaceae</taxon>
        <taxon>BOP clade</taxon>
        <taxon>Oryzoideae</taxon>
        <taxon>Oryzeae</taxon>
        <taxon>Oryzinae</taxon>
        <taxon>Oryza</taxon>
        <taxon>Oryza sativa</taxon>
    </lineage>
</organism>
<feature type="transit peptide" description="Mitochondrion" evidence="1">
    <location>
        <begin position="1"/>
        <end position="25"/>
    </location>
</feature>
<feature type="chain" id="PRO_0000247500" description="Succinate--CoA ligase [ADP-forming] subunit alpha, mitochondrial" evidence="1">
    <location>
        <begin position="26"/>
        <end position="331"/>
    </location>
</feature>
<feature type="active site" description="Tele-phosphohistidine intermediate" evidence="1">
    <location>
        <position position="283"/>
    </location>
</feature>
<feature type="binding site" evidence="1">
    <location>
        <begin position="51"/>
        <end position="54"/>
    </location>
    <ligand>
        <name>CoA</name>
        <dbReference type="ChEBI" id="CHEBI:57287"/>
    </ligand>
</feature>
<feature type="binding site" evidence="1">
    <location>
        <position position="77"/>
    </location>
    <ligand>
        <name>CoA</name>
        <dbReference type="ChEBI" id="CHEBI:57287"/>
    </ligand>
</feature>
<feature type="binding site" evidence="1">
    <location>
        <begin position="130"/>
        <end position="132"/>
    </location>
    <ligand>
        <name>CoA</name>
        <dbReference type="ChEBI" id="CHEBI:57287"/>
    </ligand>
</feature>
<feature type="binding site" evidence="1">
    <location>
        <position position="194"/>
    </location>
    <ligand>
        <name>substrate</name>
        <note>ligand shared with subunit beta</note>
    </ligand>
</feature>
<protein>
    <recommendedName>
        <fullName evidence="1">Succinate--CoA ligase [ADP-forming] subunit alpha, mitochondrial</fullName>
        <ecNumber evidence="1">6.2.1.5</ecNumber>
    </recommendedName>
    <alternativeName>
        <fullName evidence="1">Succinyl-CoA synthetase subunit alpha</fullName>
        <shortName evidence="1">SCS-alpha</shortName>
    </alternativeName>
</protein>
<sequence>MAASARRASQLLGSAASRLLHARGFAAAAAAAPSPAVFVDKSTRVICQGITGKNGTFHTEQAIEYGTTMVGGVTPKKGGTEHLGLPVFNSVAEAKAETKANASVIYVPPPFAAAAIMEAMEAELDLVVCITEGIPQHDMVKVKAALNKQSKTRLIGPNCPGIIKPGECKIGIMPGYIHKPGRVGIVSRSGTLTYEAVFQTTAVGLGQSTCVGIGGDPFNGTNFVDCLEKFVDDPQTEGIVLIGEIGGTAEEDAAAFIQESKTQKPVVAFIAGLTAPPGRRMGHAGAIVSGGKGTAQDKIKALREAGVTVVESPAKIGSTMFEIFKQRGMLE</sequence>
<gene>
    <name type="ordered locus">Os07g0577700</name>
    <name type="ordered locus">LOC_Os07g38970</name>
    <name type="ORF">OJ1065_B06.20</name>
    <name type="ORF">OsJ_24862</name>
</gene>
<accession>Q6ZL94</accession>
<accession>A0A0P0X7X8</accession>
<accession>A3BLH2</accession>
<proteinExistence type="evidence at protein level"/>
<evidence type="ECO:0000255" key="1">
    <source>
        <dbReference type="HAMAP-Rule" id="MF_03222"/>
    </source>
</evidence>